<name>THIG_BRUA4</name>
<sequence>MLEFYGQKFESRLLLGTAQYPSPAILADAVRASQSDIVTVSLRRESGEARAGQDFWALIRELGVAVLPNTAGCHTPREAVTTAKMAREIFGTNWIKLEVIGDTDTLQPDPFGLVEAARALCDDGFEVFPYMNDDLVVAERLIEAGCKVLMPWGAPIGSGRGLNNPYALKTMRAHFPDIPLVVDAGIGVPSHAAAAMELGYDAVLINTAVAKAGDPVAMARGFALAVEAGRLAFEADAIEARDMAAPSTPLLGKAFL</sequence>
<reference key="1">
    <citation type="journal article" date="2011" name="J. Bacteriol.">
        <title>Genome of Ochrobactrum anthropi ATCC 49188 T, a versatile opportunistic pathogen and symbiont of several eukaryotic hosts.</title>
        <authorList>
            <person name="Chain P.S."/>
            <person name="Lang D.M."/>
            <person name="Comerci D.J."/>
            <person name="Malfatti S.A."/>
            <person name="Vergez L.M."/>
            <person name="Shin M."/>
            <person name="Ugalde R.A."/>
            <person name="Garcia E."/>
            <person name="Tolmasky M.E."/>
        </authorList>
    </citation>
    <scope>NUCLEOTIDE SEQUENCE [LARGE SCALE GENOMIC DNA]</scope>
    <source>
        <strain>ATCC 49188 / DSM 6882 / CCUG 24695 / JCM 21032 / LMG 3331 / NBRC 15819 / NCTC 12168 / Alc 37</strain>
    </source>
</reference>
<gene>
    <name evidence="1" type="primary">thiG</name>
    <name type="ordered locus">Oant_0282</name>
</gene>
<keyword id="KW-0963">Cytoplasm</keyword>
<keyword id="KW-1185">Reference proteome</keyword>
<keyword id="KW-0704">Schiff base</keyword>
<keyword id="KW-0784">Thiamine biosynthesis</keyword>
<keyword id="KW-0808">Transferase</keyword>
<evidence type="ECO:0000255" key="1">
    <source>
        <dbReference type="HAMAP-Rule" id="MF_00443"/>
    </source>
</evidence>
<comment type="function">
    <text evidence="1">Catalyzes the rearrangement of 1-deoxy-D-xylulose 5-phosphate (DXP) to produce the thiazole phosphate moiety of thiamine. Sulfur is provided by the thiocarboxylate moiety of the carrier protein ThiS. In vitro, sulfur can be provided by H(2)S.</text>
</comment>
<comment type="catalytic activity">
    <reaction evidence="1">
        <text>[ThiS sulfur-carrier protein]-C-terminal-Gly-aminoethanethioate + 2-iminoacetate + 1-deoxy-D-xylulose 5-phosphate = [ThiS sulfur-carrier protein]-C-terminal Gly-Gly + 2-[(2R,5Z)-2-carboxy-4-methylthiazol-5(2H)-ylidene]ethyl phosphate + 2 H2O + H(+)</text>
        <dbReference type="Rhea" id="RHEA:26297"/>
        <dbReference type="Rhea" id="RHEA-COMP:12909"/>
        <dbReference type="Rhea" id="RHEA-COMP:19908"/>
        <dbReference type="ChEBI" id="CHEBI:15377"/>
        <dbReference type="ChEBI" id="CHEBI:15378"/>
        <dbReference type="ChEBI" id="CHEBI:57792"/>
        <dbReference type="ChEBI" id="CHEBI:62899"/>
        <dbReference type="ChEBI" id="CHEBI:77846"/>
        <dbReference type="ChEBI" id="CHEBI:90778"/>
        <dbReference type="ChEBI" id="CHEBI:232372"/>
        <dbReference type="EC" id="2.8.1.10"/>
    </reaction>
</comment>
<comment type="pathway">
    <text evidence="1">Cofactor biosynthesis; thiamine diphosphate biosynthesis.</text>
</comment>
<comment type="subunit">
    <text evidence="1">Homotetramer. Forms heterodimers with either ThiH or ThiS.</text>
</comment>
<comment type="subcellular location">
    <subcellularLocation>
        <location evidence="1">Cytoplasm</location>
    </subcellularLocation>
</comment>
<comment type="similarity">
    <text evidence="1">Belongs to the ThiG family.</text>
</comment>
<accession>A6WVK9</accession>
<protein>
    <recommendedName>
        <fullName evidence="1">Thiazole synthase</fullName>
        <ecNumber evidence="1">2.8.1.10</ecNumber>
    </recommendedName>
</protein>
<dbReference type="EC" id="2.8.1.10" evidence="1"/>
<dbReference type="EMBL" id="CP000758">
    <property type="protein sequence ID" value="ABS13013.1"/>
    <property type="molecule type" value="Genomic_DNA"/>
</dbReference>
<dbReference type="RefSeq" id="WP_011982468.1">
    <property type="nucleotide sequence ID" value="NC_009667.1"/>
</dbReference>
<dbReference type="SMR" id="A6WVK9"/>
<dbReference type="STRING" id="439375.Oant_0282"/>
<dbReference type="KEGG" id="oan:Oant_0282"/>
<dbReference type="PATRIC" id="fig|439375.7.peg.302"/>
<dbReference type="eggNOG" id="COG2022">
    <property type="taxonomic scope" value="Bacteria"/>
</dbReference>
<dbReference type="HOGENOM" id="CLU_062233_1_0_5"/>
<dbReference type="PhylomeDB" id="A6WVK9"/>
<dbReference type="UniPathway" id="UPA00060"/>
<dbReference type="Proteomes" id="UP000002301">
    <property type="component" value="Chromosome 1"/>
</dbReference>
<dbReference type="GO" id="GO:0005737">
    <property type="term" value="C:cytoplasm"/>
    <property type="evidence" value="ECO:0007669"/>
    <property type="project" value="UniProtKB-SubCell"/>
</dbReference>
<dbReference type="GO" id="GO:1990107">
    <property type="term" value="F:thiazole synthase activity"/>
    <property type="evidence" value="ECO:0007669"/>
    <property type="project" value="UniProtKB-EC"/>
</dbReference>
<dbReference type="GO" id="GO:0009229">
    <property type="term" value="P:thiamine diphosphate biosynthetic process"/>
    <property type="evidence" value="ECO:0007669"/>
    <property type="project" value="UniProtKB-UniRule"/>
</dbReference>
<dbReference type="CDD" id="cd04728">
    <property type="entry name" value="ThiG"/>
    <property type="match status" value="1"/>
</dbReference>
<dbReference type="Gene3D" id="3.20.20.70">
    <property type="entry name" value="Aldolase class I"/>
    <property type="match status" value="1"/>
</dbReference>
<dbReference type="HAMAP" id="MF_00443">
    <property type="entry name" value="ThiG"/>
    <property type="match status" value="1"/>
</dbReference>
<dbReference type="InterPro" id="IPR013785">
    <property type="entry name" value="Aldolase_TIM"/>
</dbReference>
<dbReference type="InterPro" id="IPR033983">
    <property type="entry name" value="Thiazole_synthase_ThiG"/>
</dbReference>
<dbReference type="InterPro" id="IPR008867">
    <property type="entry name" value="ThiG"/>
</dbReference>
<dbReference type="PANTHER" id="PTHR34266">
    <property type="entry name" value="THIAZOLE SYNTHASE"/>
    <property type="match status" value="1"/>
</dbReference>
<dbReference type="PANTHER" id="PTHR34266:SF2">
    <property type="entry name" value="THIAZOLE SYNTHASE"/>
    <property type="match status" value="1"/>
</dbReference>
<dbReference type="Pfam" id="PF05690">
    <property type="entry name" value="ThiG"/>
    <property type="match status" value="1"/>
</dbReference>
<dbReference type="SUPFAM" id="SSF110399">
    <property type="entry name" value="ThiG-like"/>
    <property type="match status" value="1"/>
</dbReference>
<proteinExistence type="inferred from homology"/>
<feature type="chain" id="PRO_1000026021" description="Thiazole synthase">
    <location>
        <begin position="1"/>
        <end position="256"/>
    </location>
</feature>
<feature type="active site" description="Schiff-base intermediate with DXP" evidence="1">
    <location>
        <position position="96"/>
    </location>
</feature>
<feature type="binding site" evidence="1">
    <location>
        <position position="157"/>
    </location>
    <ligand>
        <name>1-deoxy-D-xylulose 5-phosphate</name>
        <dbReference type="ChEBI" id="CHEBI:57792"/>
    </ligand>
</feature>
<feature type="binding site" evidence="1">
    <location>
        <begin position="184"/>
        <end position="185"/>
    </location>
    <ligand>
        <name>1-deoxy-D-xylulose 5-phosphate</name>
        <dbReference type="ChEBI" id="CHEBI:57792"/>
    </ligand>
</feature>
<feature type="binding site" evidence="1">
    <location>
        <begin position="206"/>
        <end position="207"/>
    </location>
    <ligand>
        <name>1-deoxy-D-xylulose 5-phosphate</name>
        <dbReference type="ChEBI" id="CHEBI:57792"/>
    </ligand>
</feature>
<organism>
    <name type="scientific">Brucella anthropi (strain ATCC 49188 / DSM 6882 / CCUG 24695 / JCM 21032 / LMG 3331 / NBRC 15819 / NCTC 12168 / Alc 37)</name>
    <name type="common">Ochrobactrum anthropi</name>
    <dbReference type="NCBI Taxonomy" id="439375"/>
    <lineage>
        <taxon>Bacteria</taxon>
        <taxon>Pseudomonadati</taxon>
        <taxon>Pseudomonadota</taxon>
        <taxon>Alphaproteobacteria</taxon>
        <taxon>Hyphomicrobiales</taxon>
        <taxon>Brucellaceae</taxon>
        <taxon>Brucella/Ochrobactrum group</taxon>
        <taxon>Brucella</taxon>
    </lineage>
</organism>